<sequence length="111" mass="11344">MGSSFSGSTEFSAPAPPTVSTAVPANPPAKSAVPASPARDPELKTCWSCRVLSGSTLFGAGTYVYLVARRPLKQGIPPGPGTVLQMVIGISIACWGVVVLVDPKGKSHPVI</sequence>
<protein>
    <recommendedName>
        <fullName evidence="1">Distal membrane-arm assembly complex protein 1</fullName>
    </recommendedName>
    <alternativeName>
        <fullName evidence="4">Transmembrane protein 261</fullName>
    </alternativeName>
</protein>
<evidence type="ECO:0000250" key="1">
    <source>
        <dbReference type="UniProtKB" id="Q96GE9"/>
    </source>
</evidence>
<evidence type="ECO:0000255" key="2"/>
<evidence type="ECO:0000256" key="3">
    <source>
        <dbReference type="SAM" id="MobiDB-lite"/>
    </source>
</evidence>
<evidence type="ECO:0000305" key="4"/>
<evidence type="ECO:0000312" key="5">
    <source>
        <dbReference type="MGI" id="MGI:1914178"/>
    </source>
</evidence>
<dbReference type="EMBL" id="AK003640">
    <property type="protein sequence ID" value="BAB22906.1"/>
    <property type="molecule type" value="mRNA"/>
</dbReference>
<dbReference type="EMBL" id="AK013937">
    <property type="protein sequence ID" value="BAB29069.1"/>
    <property type="molecule type" value="mRNA"/>
</dbReference>
<dbReference type="EMBL" id="AL773510">
    <property type="protein sequence ID" value="CAD83065.1"/>
    <property type="molecule type" value="Genomic_DNA"/>
</dbReference>
<dbReference type="EMBL" id="BC022621">
    <property type="protein sequence ID" value="AAH22621.1"/>
    <property type="molecule type" value="mRNA"/>
</dbReference>
<dbReference type="CCDS" id="CCDS18288.1"/>
<dbReference type="RefSeq" id="NP_080125.1">
    <property type="nucleotide sequence ID" value="NM_025849.4"/>
</dbReference>
<dbReference type="FunCoup" id="Q9CQ00">
    <property type="interactions" value="78"/>
</dbReference>
<dbReference type="IntAct" id="Q9CQ00">
    <property type="interactions" value="1"/>
</dbReference>
<dbReference type="STRING" id="10090.ENSMUSP00000030103"/>
<dbReference type="iPTMnet" id="Q9CQ00"/>
<dbReference type="PhosphoSitePlus" id="Q9CQ00"/>
<dbReference type="jPOST" id="Q9CQ00"/>
<dbReference type="PaxDb" id="10090-ENSMUSP00000030103"/>
<dbReference type="PeptideAtlas" id="Q9CQ00"/>
<dbReference type="ProteomicsDB" id="279546"/>
<dbReference type="Pumba" id="Q9CQ00"/>
<dbReference type="Antibodypedia" id="3009">
    <property type="antibodies" value="19 antibodies from 10 providers"/>
</dbReference>
<dbReference type="DNASU" id="66928"/>
<dbReference type="Ensembl" id="ENSMUST00000030103.9">
    <property type="protein sequence ID" value="ENSMUSP00000030103.9"/>
    <property type="gene ID" value="ENSMUSG00000028398.9"/>
</dbReference>
<dbReference type="GeneID" id="66928"/>
<dbReference type="KEGG" id="mmu:66928"/>
<dbReference type="UCSC" id="uc008tjk.1">
    <property type="organism name" value="mouse"/>
</dbReference>
<dbReference type="AGR" id="MGI:1914178"/>
<dbReference type="CTD" id="90871"/>
<dbReference type="MGI" id="MGI:1914178">
    <property type="gene designation" value="Dmac1"/>
</dbReference>
<dbReference type="VEuPathDB" id="HostDB:ENSMUSG00000028398"/>
<dbReference type="eggNOG" id="ENOG502S9M0">
    <property type="taxonomic scope" value="Eukaryota"/>
</dbReference>
<dbReference type="GeneTree" id="ENSGT00390000003343"/>
<dbReference type="HOGENOM" id="CLU_171933_0_0_1"/>
<dbReference type="InParanoid" id="Q9CQ00"/>
<dbReference type="OMA" id="FKNCWSC"/>
<dbReference type="OrthoDB" id="6340866at2759"/>
<dbReference type="PhylomeDB" id="Q9CQ00"/>
<dbReference type="TreeFam" id="TF330733"/>
<dbReference type="Reactome" id="R-MMU-6799198">
    <property type="pathway name" value="Complex I biogenesis"/>
</dbReference>
<dbReference type="BioGRID-ORCS" id="66928">
    <property type="hits" value="16 hits in 78 CRISPR screens"/>
</dbReference>
<dbReference type="ChiTaRS" id="Dmac1">
    <property type="organism name" value="mouse"/>
</dbReference>
<dbReference type="PRO" id="PR:Q9CQ00"/>
<dbReference type="Proteomes" id="UP000000589">
    <property type="component" value="Chromosome 4"/>
</dbReference>
<dbReference type="RNAct" id="Q9CQ00">
    <property type="molecule type" value="protein"/>
</dbReference>
<dbReference type="Bgee" id="ENSMUSG00000028398">
    <property type="expression patterns" value="Expressed in dorsal pancreas and 260 other cell types or tissues"/>
</dbReference>
<dbReference type="GO" id="GO:0005743">
    <property type="term" value="C:mitochondrial inner membrane"/>
    <property type="evidence" value="ECO:0000250"/>
    <property type="project" value="UniProtKB"/>
</dbReference>
<dbReference type="GO" id="GO:0032981">
    <property type="term" value="P:mitochondrial respiratory chain complex I assembly"/>
    <property type="evidence" value="ECO:0000250"/>
    <property type="project" value="UniProtKB"/>
</dbReference>
<dbReference type="InterPro" id="IPR028036">
    <property type="entry name" value="DMAC1-like_dom"/>
</dbReference>
<dbReference type="InterPro" id="IPR053117">
    <property type="entry name" value="DMAC_Protein"/>
</dbReference>
<dbReference type="PANTHER" id="PTHR36469">
    <property type="entry name" value="DISTAL MEMBRANE-ARM ASSEMBLY COMPLEX PROTEIN 1"/>
    <property type="match status" value="1"/>
</dbReference>
<dbReference type="PANTHER" id="PTHR36469:SF1">
    <property type="entry name" value="DISTAL MEMBRANE-ARM ASSEMBLY COMPLEX PROTEIN 1"/>
    <property type="match status" value="1"/>
</dbReference>
<dbReference type="Pfam" id="PF15055">
    <property type="entry name" value="DUF4536"/>
    <property type="match status" value="1"/>
</dbReference>
<comment type="function">
    <text evidence="1">Required for the assembly of the mitochondrial NADH:ubiquinone oxidoreductase complex (complex I). Involved in the assembly of the distal region of complex I.</text>
</comment>
<comment type="subunit">
    <text evidence="1">Interacts with incompletely assembled mitochondrial NADH:ubiquinone oxidoreductase complex (complex I).</text>
</comment>
<comment type="subcellular location">
    <subcellularLocation>
        <location evidence="1">Mitochondrion inner membrane</location>
        <topology evidence="1">Multi-pass membrane protein</topology>
    </subcellularLocation>
</comment>
<keyword id="KW-0472">Membrane</keyword>
<keyword id="KW-0496">Mitochondrion</keyword>
<keyword id="KW-0999">Mitochondrion inner membrane</keyword>
<keyword id="KW-1185">Reference proteome</keyword>
<keyword id="KW-0812">Transmembrane</keyword>
<keyword id="KW-1133">Transmembrane helix</keyword>
<feature type="chain" id="PRO_0000089730" description="Distal membrane-arm assembly complex protein 1">
    <location>
        <begin position="1"/>
        <end position="111"/>
    </location>
</feature>
<feature type="transmembrane region" description="Helical" evidence="2">
    <location>
        <begin position="51"/>
        <end position="68"/>
    </location>
</feature>
<feature type="transmembrane region" description="Helical" evidence="2">
    <location>
        <begin position="81"/>
        <end position="101"/>
    </location>
</feature>
<feature type="region of interest" description="Disordered" evidence="3">
    <location>
        <begin position="1"/>
        <end position="40"/>
    </location>
</feature>
<feature type="compositionally biased region" description="Polar residues" evidence="3">
    <location>
        <begin position="1"/>
        <end position="11"/>
    </location>
</feature>
<feature type="compositionally biased region" description="Low complexity" evidence="3">
    <location>
        <begin position="18"/>
        <end position="38"/>
    </location>
</feature>
<name>DMAC1_MOUSE</name>
<organism>
    <name type="scientific">Mus musculus</name>
    <name type="common">Mouse</name>
    <dbReference type="NCBI Taxonomy" id="10090"/>
    <lineage>
        <taxon>Eukaryota</taxon>
        <taxon>Metazoa</taxon>
        <taxon>Chordata</taxon>
        <taxon>Craniata</taxon>
        <taxon>Vertebrata</taxon>
        <taxon>Euteleostomi</taxon>
        <taxon>Mammalia</taxon>
        <taxon>Eutheria</taxon>
        <taxon>Euarchontoglires</taxon>
        <taxon>Glires</taxon>
        <taxon>Rodentia</taxon>
        <taxon>Myomorpha</taxon>
        <taxon>Muroidea</taxon>
        <taxon>Muridae</taxon>
        <taxon>Murinae</taxon>
        <taxon>Mus</taxon>
        <taxon>Mus</taxon>
    </lineage>
</organism>
<accession>Q9CQ00</accession>
<proteinExistence type="evidence at protein level"/>
<gene>
    <name evidence="1" type="primary">Dmac1</name>
    <name evidence="5" type="synonym">Tmem261</name>
</gene>
<reference key="1">
    <citation type="journal article" date="2005" name="Science">
        <title>The transcriptional landscape of the mammalian genome.</title>
        <authorList>
            <person name="Carninci P."/>
            <person name="Kasukawa T."/>
            <person name="Katayama S."/>
            <person name="Gough J."/>
            <person name="Frith M.C."/>
            <person name="Maeda N."/>
            <person name="Oyama R."/>
            <person name="Ravasi T."/>
            <person name="Lenhard B."/>
            <person name="Wells C."/>
            <person name="Kodzius R."/>
            <person name="Shimokawa K."/>
            <person name="Bajic V.B."/>
            <person name="Brenner S.E."/>
            <person name="Batalov S."/>
            <person name="Forrest A.R."/>
            <person name="Zavolan M."/>
            <person name="Davis M.J."/>
            <person name="Wilming L.G."/>
            <person name="Aidinis V."/>
            <person name="Allen J.E."/>
            <person name="Ambesi-Impiombato A."/>
            <person name="Apweiler R."/>
            <person name="Aturaliya R.N."/>
            <person name="Bailey T.L."/>
            <person name="Bansal M."/>
            <person name="Baxter L."/>
            <person name="Beisel K.W."/>
            <person name="Bersano T."/>
            <person name="Bono H."/>
            <person name="Chalk A.M."/>
            <person name="Chiu K.P."/>
            <person name="Choudhary V."/>
            <person name="Christoffels A."/>
            <person name="Clutterbuck D.R."/>
            <person name="Crowe M.L."/>
            <person name="Dalla E."/>
            <person name="Dalrymple B.P."/>
            <person name="de Bono B."/>
            <person name="Della Gatta G."/>
            <person name="di Bernardo D."/>
            <person name="Down T."/>
            <person name="Engstrom P."/>
            <person name="Fagiolini M."/>
            <person name="Faulkner G."/>
            <person name="Fletcher C.F."/>
            <person name="Fukushima T."/>
            <person name="Furuno M."/>
            <person name="Futaki S."/>
            <person name="Gariboldi M."/>
            <person name="Georgii-Hemming P."/>
            <person name="Gingeras T.R."/>
            <person name="Gojobori T."/>
            <person name="Green R.E."/>
            <person name="Gustincich S."/>
            <person name="Harbers M."/>
            <person name="Hayashi Y."/>
            <person name="Hensch T.K."/>
            <person name="Hirokawa N."/>
            <person name="Hill D."/>
            <person name="Huminiecki L."/>
            <person name="Iacono M."/>
            <person name="Ikeo K."/>
            <person name="Iwama A."/>
            <person name="Ishikawa T."/>
            <person name="Jakt M."/>
            <person name="Kanapin A."/>
            <person name="Katoh M."/>
            <person name="Kawasawa Y."/>
            <person name="Kelso J."/>
            <person name="Kitamura H."/>
            <person name="Kitano H."/>
            <person name="Kollias G."/>
            <person name="Krishnan S.P."/>
            <person name="Kruger A."/>
            <person name="Kummerfeld S.K."/>
            <person name="Kurochkin I.V."/>
            <person name="Lareau L.F."/>
            <person name="Lazarevic D."/>
            <person name="Lipovich L."/>
            <person name="Liu J."/>
            <person name="Liuni S."/>
            <person name="McWilliam S."/>
            <person name="Madan Babu M."/>
            <person name="Madera M."/>
            <person name="Marchionni L."/>
            <person name="Matsuda H."/>
            <person name="Matsuzawa S."/>
            <person name="Miki H."/>
            <person name="Mignone F."/>
            <person name="Miyake S."/>
            <person name="Morris K."/>
            <person name="Mottagui-Tabar S."/>
            <person name="Mulder N."/>
            <person name="Nakano N."/>
            <person name="Nakauchi H."/>
            <person name="Ng P."/>
            <person name="Nilsson R."/>
            <person name="Nishiguchi S."/>
            <person name="Nishikawa S."/>
            <person name="Nori F."/>
            <person name="Ohara O."/>
            <person name="Okazaki Y."/>
            <person name="Orlando V."/>
            <person name="Pang K.C."/>
            <person name="Pavan W.J."/>
            <person name="Pavesi G."/>
            <person name="Pesole G."/>
            <person name="Petrovsky N."/>
            <person name="Piazza S."/>
            <person name="Reed J."/>
            <person name="Reid J.F."/>
            <person name="Ring B.Z."/>
            <person name="Ringwald M."/>
            <person name="Rost B."/>
            <person name="Ruan Y."/>
            <person name="Salzberg S.L."/>
            <person name="Sandelin A."/>
            <person name="Schneider C."/>
            <person name="Schoenbach C."/>
            <person name="Sekiguchi K."/>
            <person name="Semple C.A."/>
            <person name="Seno S."/>
            <person name="Sessa L."/>
            <person name="Sheng Y."/>
            <person name="Shibata Y."/>
            <person name="Shimada H."/>
            <person name="Shimada K."/>
            <person name="Silva D."/>
            <person name="Sinclair B."/>
            <person name="Sperling S."/>
            <person name="Stupka E."/>
            <person name="Sugiura K."/>
            <person name="Sultana R."/>
            <person name="Takenaka Y."/>
            <person name="Taki K."/>
            <person name="Tammoja K."/>
            <person name="Tan S.L."/>
            <person name="Tang S."/>
            <person name="Taylor M.S."/>
            <person name="Tegner J."/>
            <person name="Teichmann S.A."/>
            <person name="Ueda H.R."/>
            <person name="van Nimwegen E."/>
            <person name="Verardo R."/>
            <person name="Wei C.L."/>
            <person name="Yagi K."/>
            <person name="Yamanishi H."/>
            <person name="Zabarovsky E."/>
            <person name="Zhu S."/>
            <person name="Zimmer A."/>
            <person name="Hide W."/>
            <person name="Bult C."/>
            <person name="Grimmond S.M."/>
            <person name="Teasdale R.D."/>
            <person name="Liu E.T."/>
            <person name="Brusic V."/>
            <person name="Quackenbush J."/>
            <person name="Wahlestedt C."/>
            <person name="Mattick J.S."/>
            <person name="Hume D.A."/>
            <person name="Kai C."/>
            <person name="Sasaki D."/>
            <person name="Tomaru Y."/>
            <person name="Fukuda S."/>
            <person name="Kanamori-Katayama M."/>
            <person name="Suzuki M."/>
            <person name="Aoki J."/>
            <person name="Arakawa T."/>
            <person name="Iida J."/>
            <person name="Imamura K."/>
            <person name="Itoh M."/>
            <person name="Kato T."/>
            <person name="Kawaji H."/>
            <person name="Kawagashira N."/>
            <person name="Kawashima T."/>
            <person name="Kojima M."/>
            <person name="Kondo S."/>
            <person name="Konno H."/>
            <person name="Nakano K."/>
            <person name="Ninomiya N."/>
            <person name="Nishio T."/>
            <person name="Okada M."/>
            <person name="Plessy C."/>
            <person name="Shibata K."/>
            <person name="Shiraki T."/>
            <person name="Suzuki S."/>
            <person name="Tagami M."/>
            <person name="Waki K."/>
            <person name="Watahiki A."/>
            <person name="Okamura-Oho Y."/>
            <person name="Suzuki H."/>
            <person name="Kawai J."/>
            <person name="Hayashizaki Y."/>
        </authorList>
    </citation>
    <scope>NUCLEOTIDE SEQUENCE [LARGE SCALE MRNA]</scope>
    <source>
        <strain>C57BL/6J</strain>
        <tissue>Embryo</tissue>
        <tissue>Head</tissue>
    </source>
</reference>
<reference key="2">
    <citation type="journal article" date="2009" name="PLoS Biol.">
        <title>Lineage-specific biology revealed by a finished genome assembly of the mouse.</title>
        <authorList>
            <person name="Church D.M."/>
            <person name="Goodstadt L."/>
            <person name="Hillier L.W."/>
            <person name="Zody M.C."/>
            <person name="Goldstein S."/>
            <person name="She X."/>
            <person name="Bult C.J."/>
            <person name="Agarwala R."/>
            <person name="Cherry J.L."/>
            <person name="DiCuccio M."/>
            <person name="Hlavina W."/>
            <person name="Kapustin Y."/>
            <person name="Meric P."/>
            <person name="Maglott D."/>
            <person name="Birtle Z."/>
            <person name="Marques A.C."/>
            <person name="Graves T."/>
            <person name="Zhou S."/>
            <person name="Teague B."/>
            <person name="Potamousis K."/>
            <person name="Churas C."/>
            <person name="Place M."/>
            <person name="Herschleb J."/>
            <person name="Runnheim R."/>
            <person name="Forrest D."/>
            <person name="Amos-Landgraf J."/>
            <person name="Schwartz D.C."/>
            <person name="Cheng Z."/>
            <person name="Lindblad-Toh K."/>
            <person name="Eichler E.E."/>
            <person name="Ponting C.P."/>
        </authorList>
    </citation>
    <scope>NUCLEOTIDE SEQUENCE [LARGE SCALE GENOMIC DNA]</scope>
    <source>
        <strain>C57BL/6J</strain>
    </source>
</reference>
<reference key="3">
    <citation type="journal article" date="2004" name="Genome Res.">
        <title>The status, quality, and expansion of the NIH full-length cDNA project: the Mammalian Gene Collection (MGC).</title>
        <authorList>
            <consortium name="The MGC Project Team"/>
        </authorList>
    </citation>
    <scope>NUCLEOTIDE SEQUENCE [LARGE SCALE MRNA]</scope>
    <source>
        <strain>FVB/N</strain>
        <tissue>Salivary gland</tissue>
    </source>
</reference>
<reference key="4">
    <citation type="journal article" date="2010" name="Cell">
        <title>A tissue-specific atlas of mouse protein phosphorylation and expression.</title>
        <authorList>
            <person name="Huttlin E.L."/>
            <person name="Jedrychowski M.P."/>
            <person name="Elias J.E."/>
            <person name="Goswami T."/>
            <person name="Rad R."/>
            <person name="Beausoleil S.A."/>
            <person name="Villen J."/>
            <person name="Haas W."/>
            <person name="Sowa M.E."/>
            <person name="Gygi S.P."/>
        </authorList>
    </citation>
    <scope>IDENTIFICATION BY MASS SPECTROMETRY [LARGE SCALE ANALYSIS]</scope>
    <source>
        <tissue>Heart</tissue>
        <tissue>Liver</tissue>
    </source>
</reference>